<proteinExistence type="inferred from homology"/>
<protein>
    <recommendedName>
        <fullName evidence="1">GTPase Der</fullName>
    </recommendedName>
    <alternativeName>
        <fullName evidence="1">GTP-binding protein EngA</fullName>
    </alternativeName>
</protein>
<feature type="chain" id="PRO_0000178983" description="GTPase Der">
    <location>
        <begin position="1"/>
        <end position="469"/>
    </location>
</feature>
<feature type="domain" description="EngA-type G 1">
    <location>
        <begin position="3"/>
        <end position="167"/>
    </location>
</feature>
<feature type="domain" description="EngA-type G 2">
    <location>
        <begin position="175"/>
        <end position="348"/>
    </location>
</feature>
<feature type="domain" description="KH-like" evidence="1">
    <location>
        <begin position="349"/>
        <end position="433"/>
    </location>
</feature>
<feature type="region of interest" description="Disordered" evidence="2">
    <location>
        <begin position="429"/>
        <end position="469"/>
    </location>
</feature>
<feature type="binding site" evidence="1">
    <location>
        <begin position="9"/>
        <end position="16"/>
    </location>
    <ligand>
        <name>GTP</name>
        <dbReference type="ChEBI" id="CHEBI:37565"/>
        <label>1</label>
    </ligand>
</feature>
<feature type="binding site" evidence="1">
    <location>
        <begin position="56"/>
        <end position="60"/>
    </location>
    <ligand>
        <name>GTP</name>
        <dbReference type="ChEBI" id="CHEBI:37565"/>
        <label>1</label>
    </ligand>
</feature>
<feature type="binding site" evidence="1">
    <location>
        <begin position="119"/>
        <end position="122"/>
    </location>
    <ligand>
        <name>GTP</name>
        <dbReference type="ChEBI" id="CHEBI:37565"/>
        <label>1</label>
    </ligand>
</feature>
<feature type="binding site" evidence="1">
    <location>
        <begin position="181"/>
        <end position="188"/>
    </location>
    <ligand>
        <name>GTP</name>
        <dbReference type="ChEBI" id="CHEBI:37565"/>
        <label>2</label>
    </ligand>
</feature>
<feature type="binding site" evidence="1">
    <location>
        <begin position="228"/>
        <end position="232"/>
    </location>
    <ligand>
        <name>GTP</name>
        <dbReference type="ChEBI" id="CHEBI:37565"/>
        <label>2</label>
    </ligand>
</feature>
<feature type="binding site" evidence="1">
    <location>
        <begin position="293"/>
        <end position="296"/>
    </location>
    <ligand>
        <name>GTP</name>
        <dbReference type="ChEBI" id="CHEBI:37565"/>
        <label>2</label>
    </ligand>
</feature>
<evidence type="ECO:0000255" key="1">
    <source>
        <dbReference type="HAMAP-Rule" id="MF_00195"/>
    </source>
</evidence>
<evidence type="ECO:0000256" key="2">
    <source>
        <dbReference type="SAM" id="MobiDB-lite"/>
    </source>
</evidence>
<dbReference type="EMBL" id="AE016825">
    <property type="protein sequence ID" value="AAQ61196.1"/>
    <property type="molecule type" value="Genomic_DNA"/>
</dbReference>
<dbReference type="RefSeq" id="WP_011137081.1">
    <property type="nucleotide sequence ID" value="NC_005085.1"/>
</dbReference>
<dbReference type="SMR" id="Q7NS92"/>
<dbReference type="STRING" id="243365.CV_3534"/>
<dbReference type="GeneID" id="66364761"/>
<dbReference type="KEGG" id="cvi:CV_3534"/>
<dbReference type="eggNOG" id="COG1160">
    <property type="taxonomic scope" value="Bacteria"/>
</dbReference>
<dbReference type="HOGENOM" id="CLU_016077_6_2_4"/>
<dbReference type="OrthoDB" id="9805918at2"/>
<dbReference type="Proteomes" id="UP000001424">
    <property type="component" value="Chromosome"/>
</dbReference>
<dbReference type="GO" id="GO:0016887">
    <property type="term" value="F:ATP hydrolysis activity"/>
    <property type="evidence" value="ECO:0007669"/>
    <property type="project" value="InterPro"/>
</dbReference>
<dbReference type="GO" id="GO:0005525">
    <property type="term" value="F:GTP binding"/>
    <property type="evidence" value="ECO:0007669"/>
    <property type="project" value="UniProtKB-UniRule"/>
</dbReference>
<dbReference type="GO" id="GO:0043022">
    <property type="term" value="F:ribosome binding"/>
    <property type="evidence" value="ECO:0007669"/>
    <property type="project" value="TreeGrafter"/>
</dbReference>
<dbReference type="GO" id="GO:0042254">
    <property type="term" value="P:ribosome biogenesis"/>
    <property type="evidence" value="ECO:0007669"/>
    <property type="project" value="UniProtKB-KW"/>
</dbReference>
<dbReference type="CDD" id="cd01894">
    <property type="entry name" value="EngA1"/>
    <property type="match status" value="1"/>
</dbReference>
<dbReference type="CDD" id="cd01895">
    <property type="entry name" value="EngA2"/>
    <property type="match status" value="1"/>
</dbReference>
<dbReference type="FunFam" id="3.40.50.300:FF:000040">
    <property type="entry name" value="GTPase Der"/>
    <property type="match status" value="1"/>
</dbReference>
<dbReference type="FunFam" id="3.40.50.300:FF:000057">
    <property type="entry name" value="GTPase Der"/>
    <property type="match status" value="1"/>
</dbReference>
<dbReference type="Gene3D" id="3.30.300.20">
    <property type="match status" value="1"/>
</dbReference>
<dbReference type="Gene3D" id="3.40.50.300">
    <property type="entry name" value="P-loop containing nucleotide triphosphate hydrolases"/>
    <property type="match status" value="2"/>
</dbReference>
<dbReference type="HAMAP" id="MF_00195">
    <property type="entry name" value="GTPase_Der"/>
    <property type="match status" value="1"/>
</dbReference>
<dbReference type="InterPro" id="IPR003593">
    <property type="entry name" value="AAA+_ATPase"/>
</dbReference>
<dbReference type="InterPro" id="IPR031166">
    <property type="entry name" value="G_ENGA"/>
</dbReference>
<dbReference type="InterPro" id="IPR006073">
    <property type="entry name" value="GTP-bd"/>
</dbReference>
<dbReference type="InterPro" id="IPR016484">
    <property type="entry name" value="GTPase_Der"/>
</dbReference>
<dbReference type="InterPro" id="IPR032859">
    <property type="entry name" value="KH_dom-like"/>
</dbReference>
<dbReference type="InterPro" id="IPR015946">
    <property type="entry name" value="KH_dom-like_a/b"/>
</dbReference>
<dbReference type="InterPro" id="IPR027417">
    <property type="entry name" value="P-loop_NTPase"/>
</dbReference>
<dbReference type="InterPro" id="IPR005225">
    <property type="entry name" value="Small_GTP-bd"/>
</dbReference>
<dbReference type="NCBIfam" id="TIGR03594">
    <property type="entry name" value="GTPase_EngA"/>
    <property type="match status" value="1"/>
</dbReference>
<dbReference type="NCBIfam" id="TIGR00231">
    <property type="entry name" value="small_GTP"/>
    <property type="match status" value="2"/>
</dbReference>
<dbReference type="PANTHER" id="PTHR43834">
    <property type="entry name" value="GTPASE DER"/>
    <property type="match status" value="1"/>
</dbReference>
<dbReference type="PANTHER" id="PTHR43834:SF6">
    <property type="entry name" value="GTPASE DER"/>
    <property type="match status" value="1"/>
</dbReference>
<dbReference type="Pfam" id="PF14714">
    <property type="entry name" value="KH_dom-like"/>
    <property type="match status" value="1"/>
</dbReference>
<dbReference type="Pfam" id="PF01926">
    <property type="entry name" value="MMR_HSR1"/>
    <property type="match status" value="2"/>
</dbReference>
<dbReference type="PIRSF" id="PIRSF006485">
    <property type="entry name" value="GTP-binding_EngA"/>
    <property type="match status" value="1"/>
</dbReference>
<dbReference type="PRINTS" id="PR00326">
    <property type="entry name" value="GTP1OBG"/>
</dbReference>
<dbReference type="SMART" id="SM00382">
    <property type="entry name" value="AAA"/>
    <property type="match status" value="2"/>
</dbReference>
<dbReference type="SUPFAM" id="SSF52540">
    <property type="entry name" value="P-loop containing nucleoside triphosphate hydrolases"/>
    <property type="match status" value="2"/>
</dbReference>
<dbReference type="PROSITE" id="PS51712">
    <property type="entry name" value="G_ENGA"/>
    <property type="match status" value="2"/>
</dbReference>
<gene>
    <name evidence="1" type="primary">der</name>
    <name type="synonym">engA</name>
    <name type="ordered locus">CV_3534</name>
</gene>
<comment type="function">
    <text evidence="1">GTPase that plays an essential role in the late steps of ribosome biogenesis.</text>
</comment>
<comment type="subunit">
    <text evidence="1">Associates with the 50S ribosomal subunit.</text>
</comment>
<comment type="similarity">
    <text evidence="1">Belongs to the TRAFAC class TrmE-Era-EngA-EngB-Septin-like GTPase superfamily. EngA (Der) GTPase family.</text>
</comment>
<reference key="1">
    <citation type="journal article" date="2003" name="Proc. Natl. Acad. Sci. U.S.A.">
        <title>The complete genome sequence of Chromobacterium violaceum reveals remarkable and exploitable bacterial adaptability.</title>
        <authorList>
            <person name="Vasconcelos A.T.R."/>
            <person name="de Almeida D.F."/>
            <person name="Hungria M."/>
            <person name="Guimaraes C.T."/>
            <person name="Antonio R.V."/>
            <person name="Almeida F.C."/>
            <person name="de Almeida L.G.P."/>
            <person name="de Almeida R."/>
            <person name="Alves-Gomes J.A."/>
            <person name="Andrade E.M."/>
            <person name="Araripe J."/>
            <person name="de Araujo M.F.F."/>
            <person name="Astolfi-Filho S."/>
            <person name="Azevedo V."/>
            <person name="Baptista A.J."/>
            <person name="Bataus L.A.M."/>
            <person name="Batista J.S."/>
            <person name="Belo A."/>
            <person name="van den Berg C."/>
            <person name="Bogo M."/>
            <person name="Bonatto S."/>
            <person name="Bordignon J."/>
            <person name="Brigido M.M."/>
            <person name="Brito C.A."/>
            <person name="Brocchi M."/>
            <person name="Burity H.A."/>
            <person name="Camargo A.A."/>
            <person name="Cardoso D.D.P."/>
            <person name="Carneiro N.P."/>
            <person name="Carraro D.M."/>
            <person name="Carvalho C.M.B."/>
            <person name="Cascardo J.C.M."/>
            <person name="Cavada B.S."/>
            <person name="Chueire L.M.O."/>
            <person name="Creczynski-Pasa T.B."/>
            <person name="Cunha-Junior N.C."/>
            <person name="Fagundes N."/>
            <person name="Falcao C.L."/>
            <person name="Fantinatti F."/>
            <person name="Farias I.P."/>
            <person name="Felipe M.S.S."/>
            <person name="Ferrari L.P."/>
            <person name="Ferro J.A."/>
            <person name="Ferro M.I.T."/>
            <person name="Franco G.R."/>
            <person name="Freitas N.S.A."/>
            <person name="Furlan L.R."/>
            <person name="Gazzinelli R.T."/>
            <person name="Gomes E.A."/>
            <person name="Goncalves P.R."/>
            <person name="Grangeiro T.B."/>
            <person name="Grattapaglia D."/>
            <person name="Grisard E.C."/>
            <person name="Hanna E.S."/>
            <person name="Jardim S.N."/>
            <person name="Laurino J."/>
            <person name="Leoi L.C.T."/>
            <person name="Lima L.F.A."/>
            <person name="Loureiro M.F."/>
            <person name="Lyra M.C.C.P."/>
            <person name="Madeira H.M.F."/>
            <person name="Manfio G.P."/>
            <person name="Maranhao A.Q."/>
            <person name="Martins W.S."/>
            <person name="di Mauro S.M.Z."/>
            <person name="de Medeiros S.R.B."/>
            <person name="Meissner R.V."/>
            <person name="Moreira M.A.M."/>
            <person name="Nascimento F.F."/>
            <person name="Nicolas M.F."/>
            <person name="Oliveira J.G."/>
            <person name="Oliveira S.C."/>
            <person name="Paixao R.F.C."/>
            <person name="Parente J.A."/>
            <person name="Pedrosa F.O."/>
            <person name="Pena S.D.J."/>
            <person name="Pereira J.O."/>
            <person name="Pereira M."/>
            <person name="Pinto L.S.R.C."/>
            <person name="Pinto L.S."/>
            <person name="Porto J.I.R."/>
            <person name="Potrich D.P."/>
            <person name="Ramalho-Neto C.E."/>
            <person name="Reis A.M.M."/>
            <person name="Rigo L.U."/>
            <person name="Rondinelli E."/>
            <person name="Santos E.B.P."/>
            <person name="Santos F.R."/>
            <person name="Schneider M.P.C."/>
            <person name="Seuanez H.N."/>
            <person name="Silva A.M.R."/>
            <person name="da Silva A.L.C."/>
            <person name="Silva D.W."/>
            <person name="Silva R."/>
            <person name="Simoes I.C."/>
            <person name="Simon D."/>
            <person name="Soares C.M.A."/>
            <person name="Soares R.B.A."/>
            <person name="Souza E.M."/>
            <person name="Souza K.R.L."/>
            <person name="Souza R.C."/>
            <person name="Steffens M.B.R."/>
            <person name="Steindel M."/>
            <person name="Teixeira S.R."/>
            <person name="Urmenyi T."/>
            <person name="Vettore A."/>
            <person name="Wassem R."/>
            <person name="Zaha A."/>
            <person name="Simpson A.J.G."/>
        </authorList>
    </citation>
    <scope>NUCLEOTIDE SEQUENCE [LARGE SCALE GENOMIC DNA]</scope>
    <source>
        <strain>ATCC 12472 / DSM 30191 / JCM 1249 / CCUG 213 / NBRC 12614 / NCIMB 9131 / NCTC 9757 / MK</strain>
    </source>
</reference>
<name>DER_CHRVO</name>
<organism>
    <name type="scientific">Chromobacterium violaceum (strain ATCC 12472 / DSM 30191 / JCM 1249 / CCUG 213 / NBRC 12614 / NCIMB 9131 / NCTC 9757 / MK)</name>
    <dbReference type="NCBI Taxonomy" id="243365"/>
    <lineage>
        <taxon>Bacteria</taxon>
        <taxon>Pseudomonadati</taxon>
        <taxon>Pseudomonadota</taxon>
        <taxon>Betaproteobacteria</taxon>
        <taxon>Neisseriales</taxon>
        <taxon>Chromobacteriaceae</taxon>
        <taxon>Chromobacterium</taxon>
    </lineage>
</organism>
<sequence length="469" mass="52245">MKPTVALVGRPNVGKSTLFNRLTRSRDALVADQPGLTRDRHYGQGRVGEKPYLVVDTGGFEPVVDEGILFEMAKQTLQAVDEADAVVFLVDGRAGLTPQDKIIANRLRQLDRPVFLAVNKAEGMKHAIAGAEFHELALGEPLVISAAHGDGVRELMELVLEGFPDEVEEEDSRHPKFAVIGRPNVGKSTLVNAILGEERVIAFDQAGTTRDSIYIDFEREGHTYTIIDTAGVRRRAKVNEMLEKFSVIKTMKAIEDANVAVLVLDAQLDISEQDATIAGFALEAGRALVVAVNKWDNLDGEQKENVRREIARKLNFLDFAKFHYISAIEGRGVADLFKSIDEAYRAAMSKLATPKLTRVLQVALERQQPPRSGLIRPKMRYAHQGGQNPPVIVVHGNALDSIPASYTRYLEHTFRKVFKLQGTPLRVQYKSSENPFDNDEKDKPRAKPKPMSKMRGREKEVRYGKNSKK</sequence>
<keyword id="KW-0342">GTP-binding</keyword>
<keyword id="KW-0547">Nucleotide-binding</keyword>
<keyword id="KW-1185">Reference proteome</keyword>
<keyword id="KW-0677">Repeat</keyword>
<keyword id="KW-0690">Ribosome biogenesis</keyword>
<accession>Q7NS92</accession>